<comment type="function">
    <text>Segmentation polarity protein. Acts as a receptor for the hedgehog protein (hh). Associates with the smoothened protein (SMO) to transduce the hedgehog signal leading to the activation of wingless, decapentaplegic and patched itself. Participates in cell interactions that establish pattern within the segment and the imaginal disks during development. In the absence of HH, represses the constitutive signaling activity of smo through fused (FU).</text>
</comment>
<comment type="subunit">
    <text evidence="4">Interacts (via C-terminal cytoplasmic region) with CG5504/l(2)tid; the interaction is probably direct (PubMed:12783860). Interacts with hh/hedgehog (PubMed:12783860).</text>
</comment>
<comment type="subcellular location">
    <subcellularLocation>
        <location>Membrane</location>
        <topology>Multi-pass membrane protein</topology>
    </subcellularLocation>
</comment>
<comment type="disruption phenotype">
    <text evidence="4">Embryonic lethal with epidermal pattern formation defects.</text>
</comment>
<comment type="similarity">
    <text evidence="5">Belongs to the patched family.</text>
</comment>
<protein>
    <recommendedName>
        <fullName evidence="6">Protein patched</fullName>
    </recommendedName>
    <alternativeName>
        <fullName evidence="5">Hedgehog receptor ptc</fullName>
    </alternativeName>
</protein>
<evidence type="ECO:0000255" key="1"/>
<evidence type="ECO:0000255" key="2">
    <source>
        <dbReference type="PROSITE-ProRule" id="PRU00199"/>
    </source>
</evidence>
<evidence type="ECO:0000256" key="3">
    <source>
        <dbReference type="SAM" id="MobiDB-lite"/>
    </source>
</evidence>
<evidence type="ECO:0000269" key="4">
    <source>
    </source>
</evidence>
<evidence type="ECO:0000305" key="5"/>
<evidence type="ECO:0000312" key="6">
    <source>
        <dbReference type="FlyBase" id="FBgn0003892"/>
    </source>
</evidence>
<evidence type="ECO:0000312" key="7">
    <source>
        <dbReference type="Proteomes" id="UP000000803"/>
    </source>
</evidence>
<keyword id="KW-0217">Developmental protein</keyword>
<keyword id="KW-0325">Glycoprotein</keyword>
<keyword id="KW-0472">Membrane</keyword>
<keyword id="KW-0675">Receptor</keyword>
<keyword id="KW-1185">Reference proteome</keyword>
<keyword id="KW-0709">Segmentation polarity protein</keyword>
<keyword id="KW-0812">Transmembrane</keyword>
<keyword id="KW-1133">Transmembrane helix</keyword>
<accession>P18502</accession>
<accession>Q9V4W3</accession>
<gene>
    <name evidence="6" type="primary">ptc</name>
    <name evidence="6" type="ORF">CG2411</name>
</gene>
<dbReference type="EMBL" id="M28999">
    <property type="protein sequence ID" value="AAA28696.1"/>
    <property type="molecule type" value="Genomic_DNA"/>
</dbReference>
<dbReference type="EMBL" id="M28418">
    <property type="protein sequence ID" value="AAA28696.1"/>
    <property type="status" value="JOINED"/>
    <property type="molecule type" value="Genomic_DNA"/>
</dbReference>
<dbReference type="EMBL" id="X17558">
    <property type="protein sequence ID" value="CAA35591.1"/>
    <property type="molecule type" value="mRNA"/>
</dbReference>
<dbReference type="EMBL" id="AE013599">
    <property type="protein sequence ID" value="AAF59062.1"/>
    <property type="molecule type" value="Genomic_DNA"/>
</dbReference>
<dbReference type="PIR" id="S06119">
    <property type="entry name" value="S06119"/>
</dbReference>
<dbReference type="RefSeq" id="NP_523661.2">
    <property type="nucleotide sequence ID" value="NM_078937.4"/>
</dbReference>
<dbReference type="SMR" id="P18502"/>
<dbReference type="BioGRID" id="61701">
    <property type="interactions" value="156"/>
</dbReference>
<dbReference type="DIP" id="DIP-634N"/>
<dbReference type="FunCoup" id="P18502">
    <property type="interactions" value="215"/>
</dbReference>
<dbReference type="IntAct" id="P18502">
    <property type="interactions" value="2"/>
</dbReference>
<dbReference type="STRING" id="7227.FBpp0088443"/>
<dbReference type="TCDB" id="2.A.6.6.2">
    <property type="family name" value="the resistance-nodulation-cell division (rnd) superfamily"/>
</dbReference>
<dbReference type="GlyCosmos" id="P18502">
    <property type="glycosylation" value="5 sites, No reported glycans"/>
</dbReference>
<dbReference type="GlyGen" id="P18502">
    <property type="glycosylation" value="7 sites"/>
</dbReference>
<dbReference type="iPTMnet" id="P18502"/>
<dbReference type="PaxDb" id="7227-FBpp0088443"/>
<dbReference type="EnsemblMetazoa" id="FBtr0089427">
    <property type="protein sequence ID" value="FBpp0088443"/>
    <property type="gene ID" value="FBgn0003892"/>
</dbReference>
<dbReference type="GeneID" id="35851"/>
<dbReference type="KEGG" id="dme:Dmel_CG2411"/>
<dbReference type="UCSC" id="CG2411-RA">
    <property type="organism name" value="d. melanogaster"/>
</dbReference>
<dbReference type="AGR" id="FB:FBgn0003892"/>
<dbReference type="CTD" id="35851"/>
<dbReference type="FlyBase" id="FBgn0003892">
    <property type="gene designation" value="ptc"/>
</dbReference>
<dbReference type="VEuPathDB" id="VectorBase:FBgn0003892"/>
<dbReference type="eggNOG" id="KOG1935">
    <property type="taxonomic scope" value="Eukaryota"/>
</dbReference>
<dbReference type="GeneTree" id="ENSGT00940000167988"/>
<dbReference type="HOGENOM" id="CLU_002506_1_0_1"/>
<dbReference type="InParanoid" id="P18502"/>
<dbReference type="OMA" id="HLYDTEW"/>
<dbReference type="OrthoDB" id="5873834at2759"/>
<dbReference type="PhylomeDB" id="P18502"/>
<dbReference type="Reactome" id="R-DME-209338">
    <property type="pathway name" value="Assembly of the 'signalling complexes'"/>
</dbReference>
<dbReference type="Reactome" id="R-DME-5610787">
    <property type="pathway name" value="Hedgehog 'off' state"/>
</dbReference>
<dbReference type="Reactome" id="R-DME-5632681">
    <property type="pathway name" value="Ligand-receptor interactions"/>
</dbReference>
<dbReference type="Reactome" id="R-DME-5632684">
    <property type="pathway name" value="Hedgehog 'on' state"/>
</dbReference>
<dbReference type="SignaLink" id="P18502"/>
<dbReference type="BioGRID-ORCS" id="35851">
    <property type="hits" value="0 hits in 3 CRISPR screens"/>
</dbReference>
<dbReference type="GenomeRNAi" id="35851"/>
<dbReference type="PRO" id="PR:P18502"/>
<dbReference type="Proteomes" id="UP000000803">
    <property type="component" value="Chromosome 2R"/>
</dbReference>
<dbReference type="Bgee" id="FBgn0003892">
    <property type="expression patterns" value="Expressed in adult tracheocyte (Drosophila) in testis and 116 other cell types or tissues"/>
</dbReference>
<dbReference type="ExpressionAtlas" id="P18502">
    <property type="expression patterns" value="baseline and differential"/>
</dbReference>
<dbReference type="GO" id="GO:0009925">
    <property type="term" value="C:basal plasma membrane"/>
    <property type="evidence" value="ECO:0000314"/>
    <property type="project" value="FlyBase"/>
</dbReference>
<dbReference type="GO" id="GO:0005929">
    <property type="term" value="C:cilium"/>
    <property type="evidence" value="ECO:0000314"/>
    <property type="project" value="FlyBase"/>
</dbReference>
<dbReference type="GO" id="GO:0030139">
    <property type="term" value="C:endocytic vesicle"/>
    <property type="evidence" value="ECO:0000314"/>
    <property type="project" value="FlyBase"/>
</dbReference>
<dbReference type="GO" id="GO:0005886">
    <property type="term" value="C:plasma membrane"/>
    <property type="evidence" value="ECO:0000314"/>
    <property type="project" value="FlyBase"/>
</dbReference>
<dbReference type="GO" id="GO:0097108">
    <property type="term" value="F:hedgehog family protein binding"/>
    <property type="evidence" value="ECO:0000314"/>
    <property type="project" value="FlyBase"/>
</dbReference>
<dbReference type="GO" id="GO:0008158">
    <property type="term" value="F:hedgehog receptor activity"/>
    <property type="evidence" value="ECO:0000315"/>
    <property type="project" value="FlyBase"/>
</dbReference>
<dbReference type="GO" id="GO:0030228">
    <property type="term" value="F:lipoprotein particle receptor activity"/>
    <property type="evidence" value="ECO:0000314"/>
    <property type="project" value="FlyBase"/>
</dbReference>
<dbReference type="GO" id="GO:0070300">
    <property type="term" value="F:phosphatidic acid binding"/>
    <property type="evidence" value="ECO:0000314"/>
    <property type="project" value="FlyBase"/>
</dbReference>
<dbReference type="GO" id="GO:0070273">
    <property type="term" value="F:phosphatidylinositol-4-phosphate binding"/>
    <property type="evidence" value="ECO:0000314"/>
    <property type="project" value="FlyBase"/>
</dbReference>
<dbReference type="GO" id="GO:0005119">
    <property type="term" value="F:smoothened binding"/>
    <property type="evidence" value="ECO:0000318"/>
    <property type="project" value="GO_Central"/>
</dbReference>
<dbReference type="GO" id="GO:0048099">
    <property type="term" value="P:anterior/posterior lineage restriction, imaginal disc"/>
    <property type="evidence" value="ECO:0000304"/>
    <property type="project" value="FlyBase"/>
</dbReference>
<dbReference type="GO" id="GO:0007411">
    <property type="term" value="P:axon guidance"/>
    <property type="evidence" value="ECO:0000315"/>
    <property type="project" value="FlyBase"/>
</dbReference>
<dbReference type="GO" id="GO:0001746">
    <property type="term" value="P:Bolwig's organ morphogenesis"/>
    <property type="evidence" value="ECO:0000315"/>
    <property type="project" value="FlyBase"/>
</dbReference>
<dbReference type="GO" id="GO:0035225">
    <property type="term" value="P:determination of genital disc primordium"/>
    <property type="evidence" value="ECO:0000315"/>
    <property type="project" value="FlyBase"/>
</dbReference>
<dbReference type="GO" id="GO:0007455">
    <property type="term" value="P:eye-antennal disc morphogenesis"/>
    <property type="evidence" value="ECO:0000315"/>
    <property type="project" value="FlyBase"/>
</dbReference>
<dbReference type="GO" id="GO:0030707">
    <property type="term" value="P:follicle cell of egg chamber development"/>
    <property type="evidence" value="ECO:0000315"/>
    <property type="project" value="FlyBase"/>
</dbReference>
<dbReference type="GO" id="GO:0008406">
    <property type="term" value="P:gonad development"/>
    <property type="evidence" value="ECO:0000315"/>
    <property type="project" value="FlyBase"/>
</dbReference>
<dbReference type="GO" id="GO:0007476">
    <property type="term" value="P:imaginal disc-derived wing morphogenesis"/>
    <property type="evidence" value="ECO:0000315"/>
    <property type="project" value="FlyBase"/>
</dbReference>
<dbReference type="GO" id="GO:0055088">
    <property type="term" value="P:lipid homeostasis"/>
    <property type="evidence" value="ECO:0000315"/>
    <property type="project" value="FlyBase"/>
</dbReference>
<dbReference type="GO" id="GO:0045879">
    <property type="term" value="P:negative regulation of smoothened signaling pathway"/>
    <property type="evidence" value="ECO:0000314"/>
    <property type="project" value="FlyBase"/>
</dbReference>
<dbReference type="GO" id="GO:0035332">
    <property type="term" value="P:positive regulation of hippo signaling"/>
    <property type="evidence" value="ECO:0000315"/>
    <property type="project" value="FlyBase"/>
</dbReference>
<dbReference type="GO" id="GO:0042981">
    <property type="term" value="P:regulation of apoptotic process"/>
    <property type="evidence" value="ECO:0000316"/>
    <property type="project" value="FlyBase"/>
</dbReference>
<dbReference type="GO" id="GO:2000274">
    <property type="term" value="P:regulation of epithelial cell migration, open tracheal system"/>
    <property type="evidence" value="ECO:0000315"/>
    <property type="project" value="FlyBase"/>
</dbReference>
<dbReference type="GO" id="GO:0007346">
    <property type="term" value="P:regulation of mitotic cell cycle"/>
    <property type="evidence" value="ECO:0000315"/>
    <property type="project" value="FlyBase"/>
</dbReference>
<dbReference type="GO" id="GO:0007367">
    <property type="term" value="P:segment polarity determination"/>
    <property type="evidence" value="ECO:0007669"/>
    <property type="project" value="UniProtKB-KW"/>
</dbReference>
<dbReference type="GO" id="GO:0048100">
    <property type="term" value="P:wing disc anterior/posterior pattern formation"/>
    <property type="evidence" value="ECO:0000304"/>
    <property type="project" value="FlyBase"/>
</dbReference>
<dbReference type="FunFam" id="1.20.1640.10:FF:000027">
    <property type="entry name" value="Blast:Protein patched"/>
    <property type="match status" value="1"/>
</dbReference>
<dbReference type="FunFam" id="1.20.1640.10:FF:000038">
    <property type="entry name" value="Blast:Protein patched"/>
    <property type="match status" value="1"/>
</dbReference>
<dbReference type="Gene3D" id="1.20.1640.10">
    <property type="entry name" value="Multidrug efflux transporter AcrB transmembrane domain"/>
    <property type="match status" value="2"/>
</dbReference>
<dbReference type="InterPro" id="IPR053958">
    <property type="entry name" value="HMGCR/SNAP/NPC1-like_SSD"/>
</dbReference>
<dbReference type="InterPro" id="IPR000731">
    <property type="entry name" value="SSD"/>
</dbReference>
<dbReference type="InterPro" id="IPR004766">
    <property type="entry name" value="TM_rcpt_patched"/>
</dbReference>
<dbReference type="NCBIfam" id="TIGR00918">
    <property type="entry name" value="2A060602"/>
    <property type="match status" value="1"/>
</dbReference>
<dbReference type="PANTHER" id="PTHR46022">
    <property type="entry name" value="PROTEIN PATCHED"/>
    <property type="match status" value="1"/>
</dbReference>
<dbReference type="PANTHER" id="PTHR46022:SF1">
    <property type="entry name" value="PROTEIN PATCHED"/>
    <property type="match status" value="1"/>
</dbReference>
<dbReference type="Pfam" id="PF12349">
    <property type="entry name" value="Sterol-sensing"/>
    <property type="match status" value="1"/>
</dbReference>
<dbReference type="SUPFAM" id="SSF82866">
    <property type="entry name" value="Multidrug efflux transporter AcrB transmembrane domain"/>
    <property type="match status" value="2"/>
</dbReference>
<dbReference type="PROSITE" id="PS50156">
    <property type="entry name" value="SSD"/>
    <property type="match status" value="1"/>
</dbReference>
<organism evidence="7">
    <name type="scientific">Drosophila melanogaster</name>
    <name type="common">Fruit fly</name>
    <dbReference type="NCBI Taxonomy" id="7227"/>
    <lineage>
        <taxon>Eukaryota</taxon>
        <taxon>Metazoa</taxon>
        <taxon>Ecdysozoa</taxon>
        <taxon>Arthropoda</taxon>
        <taxon>Hexapoda</taxon>
        <taxon>Insecta</taxon>
        <taxon>Pterygota</taxon>
        <taxon>Neoptera</taxon>
        <taxon>Endopterygota</taxon>
        <taxon>Diptera</taxon>
        <taxon>Brachycera</taxon>
        <taxon>Muscomorpha</taxon>
        <taxon>Ephydroidea</taxon>
        <taxon>Drosophilidae</taxon>
        <taxon>Drosophila</taxon>
        <taxon>Sophophora</taxon>
    </lineage>
</organism>
<name>PTC_DROME</name>
<sequence length="1286" mass="142831">MDRDSLPRVPDTHGDVVDEKLFSDLYIRTSWVDAQVALDQIDKGKARGSRTAIYLRSVFQSHLETLGSSVQKHAGKVLFVAILVLSTFCVGLKSAQIHSKVHQLWIQEGGRLEAELAYTQKTIGEDESATHQLLIQTTHDPNASVLHPQALLAHLEVLVKATAVKVHLYDTEWGLRDMCNMPSTPSFEGIYYIEQILRHLIPCSIITPLDCFWEGSQLLGPESAVVIPGLNQRLLWTTLNPASVMQYMKQKMSEEKISFDFETVEQYMKRAAIGSGYMEKPCLNPLNPNCPDTAPNKNSTQPPDVGAILSGGCYGYAAKHMHWPEELIVGGAKRNRSGHLRKAQALQSVVQLMTEKEMYDQWQDNYKVHHLGWTQEKAAEVLNAWQRNFSREVEQLLRKQSRIATNYDIYVFSSAALDDILAKFSHPSALSIVIGVAVTVLYAFCTLLRWRDPVRGQSSVGVAGVLLMCFSTAAGLGLSALLGIVFNAASTQVVPFLALGLGVDHIFMLTAAYAESNRREQTKLILKKVGPSILFSACSTAGSFFAAAFIPVPALKVFCLQAAIVMCSNLAAALLVFPAMISLDLRRRTAGRADIFCCCFPVWKEQPKVAPPVLPLNNNNGRGARHPKSCNNNRVPLPAQNPLLEQRADIPGSSHSLASFSLATFAFQHYTPFLMRSWVKFLTVMGFLAALISSLYASTRLQDGLDIIDLVPKDSNEHKFLDAQTRLFGFYSMYAVTQGNFEYPTQQQLLRDYHDSFVRVPHVIKNDNGGLPDFWLLLFSEWLGNLQKIFDEEYRDGRLTKECWFPNASSDAILAYKLIVQTGHVDNPVDKELVLTNRLVNSDGIINQRAFYNYLSAWATNDVFAYGASQGKLYPEPRQYFHQPNEYDLKIPKSLPLVYAQMPFYLHGLTDTSQIKTLIGHIRDLSVKYEGFGLPNYPSGIPFIFWEQYMTLRSSLAMILACVLLAALVLVSLLLLSVWAAVLVILSVLASLAQIFGAMTLLGIKLSAIPAVILILSVGMMLCFNVLISLGFMTSVGNRQRRVQLSMQMSLGPLVHGMLTSGVAVFMLSTSPFEFVIRHFCWLLLVVLCVGACNSLLVFPILLSMVGPEAELVPLEHPDRISTPSPLPVRSSKRSGKSYVVQGSRSSRGSCQKSHHHHHKDLNDPSLTTITEEPQSWKSSNSSIQMPNDWTYQPREQRPASYAAPPPAYHKAAAQQHHQHQGPPTTPPPPFPTAYPPELQSIVVQPEVTVETTHSDSNTTKVTATANIKVELAMPGRAVRSYNFTS</sequence>
<feature type="chain" id="PRO_0000205973" description="Protein patched">
    <location>
        <begin position="1"/>
        <end position="1286"/>
    </location>
</feature>
<feature type="topological domain" description="Cytoplasmic" evidence="1">
    <location>
        <begin position="1"/>
        <end position="76"/>
    </location>
</feature>
<feature type="transmembrane region" description="Helical" evidence="1">
    <location>
        <begin position="77"/>
        <end position="92"/>
    </location>
</feature>
<feature type="topological domain" description="Extracellular" evidence="1">
    <location>
        <begin position="93"/>
        <end position="427"/>
    </location>
</feature>
<feature type="transmembrane region" description="Helical" evidence="1">
    <location>
        <begin position="428"/>
        <end position="448"/>
    </location>
</feature>
<feature type="topological domain" description="Cytoplasmic" evidence="1">
    <location>
        <begin position="449"/>
        <end position="465"/>
    </location>
</feature>
<feature type="transmembrane region" description="Helical" evidence="1">
    <location>
        <begin position="466"/>
        <end position="486"/>
    </location>
</feature>
<feature type="topological domain" description="Extracellular" evidence="1">
    <location>
        <begin position="487"/>
        <end position="492"/>
    </location>
</feature>
<feature type="transmembrane region" description="Helical" evidence="1">
    <location>
        <begin position="493"/>
        <end position="511"/>
    </location>
</feature>
<feature type="topological domain" description="Cytoplasmic" evidence="1">
    <location>
        <begin position="512"/>
        <end position="532"/>
    </location>
</feature>
<feature type="transmembrane region" description="Helical" evidence="1">
    <location>
        <begin position="533"/>
        <end position="553"/>
    </location>
</feature>
<feature type="topological domain" description="Extracellular" evidence="1">
    <location>
        <begin position="554"/>
        <end position="562"/>
    </location>
</feature>
<feature type="transmembrane region" description="Helical" evidence="1">
    <location>
        <begin position="563"/>
        <end position="583"/>
    </location>
</feature>
<feature type="topological domain" description="Cytoplasmic" evidence="1">
    <location>
        <begin position="584"/>
        <end position="677"/>
    </location>
</feature>
<feature type="transmembrane region" description="Helical" evidence="1">
    <location>
        <begin position="678"/>
        <end position="699"/>
    </location>
</feature>
<feature type="topological domain" description="Extracellular" evidence="1">
    <location>
        <begin position="700"/>
        <end position="931"/>
    </location>
</feature>
<feature type="transmembrane region" description="Helical" evidence="1">
    <location>
        <begin position="932"/>
        <end position="952"/>
    </location>
</feature>
<feature type="topological domain" description="Cytoplasmic" evidence="1">
    <location>
        <begin position="953"/>
        <end position="955"/>
    </location>
</feature>
<feature type="transmembrane region" description="Helical" evidence="1">
    <location>
        <begin position="956"/>
        <end position="976"/>
    </location>
</feature>
<feature type="topological domain" description="Extracellular" evidence="1">
    <location>
        <begin position="977"/>
        <end position="1007"/>
    </location>
</feature>
<feature type="transmembrane region" description="Helical" evidence="1">
    <location>
        <begin position="1008"/>
        <end position="1028"/>
    </location>
</feature>
<feature type="topological domain" description="Cytoplasmic" evidence="1">
    <location>
        <begin position="1029"/>
        <end position="1056"/>
    </location>
</feature>
<feature type="transmembrane region" description="Helical" evidence="1">
    <location>
        <begin position="1057"/>
        <end position="1077"/>
    </location>
</feature>
<feature type="topological domain" description="Extracellular" evidence="1">
    <location>
        <begin position="1078"/>
        <end position="1082"/>
    </location>
</feature>
<feature type="transmembrane region" description="Helical" evidence="1">
    <location>
        <begin position="1083"/>
        <end position="1103"/>
    </location>
</feature>
<feature type="topological domain" description="Cytoplasmic" evidence="1">
    <location>
        <begin position="1104"/>
        <end position="1286"/>
    </location>
</feature>
<feature type="domain" description="SSD" evidence="2">
    <location>
        <begin position="428"/>
        <end position="583"/>
    </location>
</feature>
<feature type="region of interest" description="Disordered" evidence="3">
    <location>
        <begin position="1116"/>
        <end position="1237"/>
    </location>
</feature>
<feature type="compositionally biased region" description="Polar residues" evidence="3">
    <location>
        <begin position="1141"/>
        <end position="1152"/>
    </location>
</feature>
<feature type="compositionally biased region" description="Polar residues" evidence="3">
    <location>
        <begin position="1165"/>
        <end position="1191"/>
    </location>
</feature>
<feature type="compositionally biased region" description="Low complexity" evidence="3">
    <location>
        <begin position="1199"/>
        <end position="1216"/>
    </location>
</feature>
<feature type="compositionally biased region" description="Pro residues" evidence="3">
    <location>
        <begin position="1224"/>
        <end position="1235"/>
    </location>
</feature>
<feature type="glycosylation site" description="N-linked (GlcNAc...) asparagine" evidence="1">
    <location>
        <position position="142"/>
    </location>
</feature>
<feature type="glycosylation site" description="N-linked (GlcNAc...) asparagine" evidence="1">
    <location>
        <position position="298"/>
    </location>
</feature>
<feature type="glycosylation site" description="N-linked (GlcNAc...) asparagine" evidence="1">
    <location>
        <position position="335"/>
    </location>
</feature>
<feature type="glycosylation site" description="N-linked (GlcNAc...) asparagine" evidence="1">
    <location>
        <position position="388"/>
    </location>
</feature>
<feature type="glycosylation site" description="N-linked (GlcNAc...) asparagine" evidence="1">
    <location>
        <position position="807"/>
    </location>
</feature>
<feature type="sequence conflict" description="In Ref. 2; CAA35591." evidence="5" ref="2">
    <original>R</original>
    <variation>G</variation>
    <location>
        <position position="111"/>
    </location>
</feature>
<feature type="sequence conflict" description="In Ref. 2; CAA35591." evidence="5" ref="2">
    <original>G</original>
    <variation>A</variation>
    <location>
        <position position="274"/>
    </location>
</feature>
<feature type="sequence conflict" description="In Ref. 1; AAA28696." evidence="5" ref="1">
    <original>A</original>
    <variation>R</variation>
    <location>
        <position position="332"/>
    </location>
</feature>
<feature type="sequence conflict" description="In Ref. 2; CAA35591." evidence="5" ref="2">
    <original>P</original>
    <variation>A</variation>
    <location>
        <position position="636"/>
    </location>
</feature>
<feature type="sequence conflict" description="In Ref. 2." evidence="5" ref="2">
    <original>DVF</original>
    <variation>ASSPTELLRANCIRNR</variation>
    <location>
        <begin position="862"/>
        <end position="864"/>
    </location>
</feature>
<feature type="sequence conflict" description="In Ref. 2." evidence="5" ref="2">
    <original>Y</original>
    <variation>N</variation>
    <location>
        <position position="866"/>
    </location>
</feature>
<proteinExistence type="evidence at protein level"/>
<reference key="1">
    <citation type="journal article" date="1989" name="Cell">
        <title>The Drosophila patched gene encodes a putative membrane protein required for segmental patterning.</title>
        <authorList>
            <person name="Hooper J.E."/>
            <person name="Scott M.P."/>
        </authorList>
    </citation>
    <scope>NUCLEOTIDE SEQUENCE [GENOMIC DNA]</scope>
</reference>
<reference key="2">
    <citation type="journal article" date="1989" name="Nature">
        <title>A protein with several possible membrane-spanning domains encoded by the Drosophila segment polarity gene patched.</title>
        <authorList>
            <person name="Nakano Y."/>
            <person name="Guerrero I."/>
            <person name="Hidalgo A."/>
            <person name="Taylor A."/>
            <person name="Whittle J.R.S."/>
            <person name="Ingham P.W."/>
        </authorList>
    </citation>
    <scope>NUCLEOTIDE SEQUENCE [MRNA]</scope>
</reference>
<reference key="3">
    <citation type="journal article" date="2000" name="Science">
        <title>The genome sequence of Drosophila melanogaster.</title>
        <authorList>
            <person name="Adams M.D."/>
            <person name="Celniker S.E."/>
            <person name="Holt R.A."/>
            <person name="Evans C.A."/>
            <person name="Gocayne J.D."/>
            <person name="Amanatides P.G."/>
            <person name="Scherer S.E."/>
            <person name="Li P.W."/>
            <person name="Hoskins R.A."/>
            <person name="Galle R.F."/>
            <person name="George R.A."/>
            <person name="Lewis S.E."/>
            <person name="Richards S."/>
            <person name="Ashburner M."/>
            <person name="Henderson S.N."/>
            <person name="Sutton G.G."/>
            <person name="Wortman J.R."/>
            <person name="Yandell M.D."/>
            <person name="Zhang Q."/>
            <person name="Chen L.X."/>
            <person name="Brandon R.C."/>
            <person name="Rogers Y.-H.C."/>
            <person name="Blazej R.G."/>
            <person name="Champe M."/>
            <person name="Pfeiffer B.D."/>
            <person name="Wan K.H."/>
            <person name="Doyle C."/>
            <person name="Baxter E.G."/>
            <person name="Helt G."/>
            <person name="Nelson C.R."/>
            <person name="Miklos G.L.G."/>
            <person name="Abril J.F."/>
            <person name="Agbayani A."/>
            <person name="An H.-J."/>
            <person name="Andrews-Pfannkoch C."/>
            <person name="Baldwin D."/>
            <person name="Ballew R.M."/>
            <person name="Basu A."/>
            <person name="Baxendale J."/>
            <person name="Bayraktaroglu L."/>
            <person name="Beasley E.M."/>
            <person name="Beeson K.Y."/>
            <person name="Benos P.V."/>
            <person name="Berman B.P."/>
            <person name="Bhandari D."/>
            <person name="Bolshakov S."/>
            <person name="Borkova D."/>
            <person name="Botchan M.R."/>
            <person name="Bouck J."/>
            <person name="Brokstein P."/>
            <person name="Brottier P."/>
            <person name="Burtis K.C."/>
            <person name="Busam D.A."/>
            <person name="Butler H."/>
            <person name="Cadieu E."/>
            <person name="Center A."/>
            <person name="Chandra I."/>
            <person name="Cherry J.M."/>
            <person name="Cawley S."/>
            <person name="Dahlke C."/>
            <person name="Davenport L.B."/>
            <person name="Davies P."/>
            <person name="de Pablos B."/>
            <person name="Delcher A."/>
            <person name="Deng Z."/>
            <person name="Mays A.D."/>
            <person name="Dew I."/>
            <person name="Dietz S.M."/>
            <person name="Dodson K."/>
            <person name="Doup L.E."/>
            <person name="Downes M."/>
            <person name="Dugan-Rocha S."/>
            <person name="Dunkov B.C."/>
            <person name="Dunn P."/>
            <person name="Durbin K.J."/>
            <person name="Evangelista C.C."/>
            <person name="Ferraz C."/>
            <person name="Ferriera S."/>
            <person name="Fleischmann W."/>
            <person name="Fosler C."/>
            <person name="Gabrielian A.E."/>
            <person name="Garg N.S."/>
            <person name="Gelbart W.M."/>
            <person name="Glasser K."/>
            <person name="Glodek A."/>
            <person name="Gong F."/>
            <person name="Gorrell J.H."/>
            <person name="Gu Z."/>
            <person name="Guan P."/>
            <person name="Harris M."/>
            <person name="Harris N.L."/>
            <person name="Harvey D.A."/>
            <person name="Heiman T.J."/>
            <person name="Hernandez J.R."/>
            <person name="Houck J."/>
            <person name="Hostin D."/>
            <person name="Houston K.A."/>
            <person name="Howland T.J."/>
            <person name="Wei M.-H."/>
            <person name="Ibegwam C."/>
            <person name="Jalali M."/>
            <person name="Kalush F."/>
            <person name="Karpen G.H."/>
            <person name="Ke Z."/>
            <person name="Kennison J.A."/>
            <person name="Ketchum K.A."/>
            <person name="Kimmel B.E."/>
            <person name="Kodira C.D."/>
            <person name="Kraft C.L."/>
            <person name="Kravitz S."/>
            <person name="Kulp D."/>
            <person name="Lai Z."/>
            <person name="Lasko P."/>
            <person name="Lei Y."/>
            <person name="Levitsky A.A."/>
            <person name="Li J.H."/>
            <person name="Li Z."/>
            <person name="Liang Y."/>
            <person name="Lin X."/>
            <person name="Liu X."/>
            <person name="Mattei B."/>
            <person name="McIntosh T.C."/>
            <person name="McLeod M.P."/>
            <person name="McPherson D."/>
            <person name="Merkulov G."/>
            <person name="Milshina N.V."/>
            <person name="Mobarry C."/>
            <person name="Morris J."/>
            <person name="Moshrefi A."/>
            <person name="Mount S.M."/>
            <person name="Moy M."/>
            <person name="Murphy B."/>
            <person name="Murphy L."/>
            <person name="Muzny D.M."/>
            <person name="Nelson D.L."/>
            <person name="Nelson D.R."/>
            <person name="Nelson K.A."/>
            <person name="Nixon K."/>
            <person name="Nusskern D.R."/>
            <person name="Pacleb J.M."/>
            <person name="Palazzolo M."/>
            <person name="Pittman G.S."/>
            <person name="Pan S."/>
            <person name="Pollard J."/>
            <person name="Puri V."/>
            <person name="Reese M.G."/>
            <person name="Reinert K."/>
            <person name="Remington K."/>
            <person name="Saunders R.D.C."/>
            <person name="Scheeler F."/>
            <person name="Shen H."/>
            <person name="Shue B.C."/>
            <person name="Siden-Kiamos I."/>
            <person name="Simpson M."/>
            <person name="Skupski M.P."/>
            <person name="Smith T.J."/>
            <person name="Spier E."/>
            <person name="Spradling A.C."/>
            <person name="Stapleton M."/>
            <person name="Strong R."/>
            <person name="Sun E."/>
            <person name="Svirskas R."/>
            <person name="Tector C."/>
            <person name="Turner R."/>
            <person name="Venter E."/>
            <person name="Wang A.H."/>
            <person name="Wang X."/>
            <person name="Wang Z.-Y."/>
            <person name="Wassarman D.A."/>
            <person name="Weinstock G.M."/>
            <person name="Weissenbach J."/>
            <person name="Williams S.M."/>
            <person name="Woodage T."/>
            <person name="Worley K.C."/>
            <person name="Wu D."/>
            <person name="Yang S."/>
            <person name="Yao Q.A."/>
            <person name="Ye J."/>
            <person name="Yeh R.-F."/>
            <person name="Zaveri J.S."/>
            <person name="Zhan M."/>
            <person name="Zhang G."/>
            <person name="Zhao Q."/>
            <person name="Zheng L."/>
            <person name="Zheng X.H."/>
            <person name="Zhong F.N."/>
            <person name="Zhong W."/>
            <person name="Zhou X."/>
            <person name="Zhu S.C."/>
            <person name="Zhu X."/>
            <person name="Smith H.O."/>
            <person name="Gibbs R.A."/>
            <person name="Myers E.W."/>
            <person name="Rubin G.M."/>
            <person name="Venter J.C."/>
        </authorList>
    </citation>
    <scope>NUCLEOTIDE SEQUENCE [LARGE SCALE GENOMIC DNA]</scope>
    <source>
        <strain>Berkeley</strain>
    </source>
</reference>
<reference key="4">
    <citation type="journal article" date="2002" name="Genome Biol.">
        <title>Annotation of the Drosophila melanogaster euchromatic genome: a systematic review.</title>
        <authorList>
            <person name="Misra S."/>
            <person name="Crosby M.A."/>
            <person name="Mungall C.J."/>
            <person name="Matthews B.B."/>
            <person name="Campbell K.S."/>
            <person name="Hradecky P."/>
            <person name="Huang Y."/>
            <person name="Kaminker J.S."/>
            <person name="Millburn G.H."/>
            <person name="Prochnik S.E."/>
            <person name="Smith C.D."/>
            <person name="Tupy J.L."/>
            <person name="Whitfield E.J."/>
            <person name="Bayraktaroglu L."/>
            <person name="Berman B.P."/>
            <person name="Bettencourt B.R."/>
            <person name="Celniker S.E."/>
            <person name="de Grey A.D.N.J."/>
            <person name="Drysdale R.A."/>
            <person name="Harris N.L."/>
            <person name="Richter J."/>
            <person name="Russo S."/>
            <person name="Schroeder A.J."/>
            <person name="Shu S.Q."/>
            <person name="Stapleton M."/>
            <person name="Yamada C."/>
            <person name="Ashburner M."/>
            <person name="Gelbart W.M."/>
            <person name="Rubin G.M."/>
            <person name="Lewis S.E."/>
        </authorList>
    </citation>
    <scope>GENOME REANNOTATION</scope>
    <source>
        <strain>Berkeley</strain>
    </source>
</reference>
<reference key="5">
    <citation type="journal article" date="2003" name="J. Biol. Chem.">
        <title>Understanding human cancer using Drosophila: Tid47, a cytosolic product of the DnaJ-like tumor suppressor gene l2Tid, is a novel molecular partner of patched related to skin cancer.</title>
        <authorList>
            <person name="Canamasas I."/>
            <person name="Debes A."/>
            <person name="Natali P.G."/>
            <person name="Kurzik-Dumke U."/>
        </authorList>
    </citation>
    <scope>INTERACTION WITH CG5504 AND HH</scope>
    <scope>DISRUPTION PHENOTYPE</scope>
</reference>